<protein>
    <recommendedName>
        <fullName>Ubiquitin-like protein 4A-A</fullName>
    </recommendedName>
</protein>
<accession>C1BGZ8</accession>
<proteinExistence type="evidence at transcript level"/>
<gene>
    <name type="primary">ubl4aa</name>
</gene>
<feature type="chain" id="PRO_0000403744" description="Ubiquitin-like protein 4A-A">
    <location>
        <begin position="1"/>
        <end position="154"/>
    </location>
</feature>
<feature type="domain" description="Ubiquitin-like" evidence="2">
    <location>
        <begin position="1"/>
        <end position="76"/>
    </location>
</feature>
<name>UB4AA_ONCMY</name>
<reference key="1">
    <citation type="submission" date="2009-03" db="EMBL/GenBank/DDBJ databases">
        <title>Oncorhynchus mykiss ESTs and full-length cDNAs from White Blood Cells.</title>
        <authorList>
            <person name="Yasuike M."/>
            <person name="von Schalburg K."/>
            <person name="Cooper G."/>
            <person name="Leong J."/>
            <person name="Davidson W.S."/>
            <person name="Koop B.F."/>
        </authorList>
    </citation>
    <scope>NUCLEOTIDE SEQUENCE [LARGE SCALE MRNA]</scope>
    <source>
        <tissue>Leukocyte</tissue>
    </source>
</reference>
<organism>
    <name type="scientific">Oncorhynchus mykiss</name>
    <name type="common">Rainbow trout</name>
    <name type="synonym">Salmo gairdneri</name>
    <dbReference type="NCBI Taxonomy" id="8022"/>
    <lineage>
        <taxon>Eukaryota</taxon>
        <taxon>Metazoa</taxon>
        <taxon>Chordata</taxon>
        <taxon>Craniata</taxon>
        <taxon>Vertebrata</taxon>
        <taxon>Euteleostomi</taxon>
        <taxon>Actinopterygii</taxon>
        <taxon>Neopterygii</taxon>
        <taxon>Teleostei</taxon>
        <taxon>Protacanthopterygii</taxon>
        <taxon>Salmoniformes</taxon>
        <taxon>Salmonidae</taxon>
        <taxon>Salmoninae</taxon>
        <taxon>Oncorhynchus</taxon>
    </lineage>
</organism>
<comment type="function">
    <text evidence="1">Component of the BAT3 complex, a multiprotein complex involved in the post-translational delivery of tail-anchored (TA) membrane proteins to the endoplasmic reticulum membrane. TA membrane proteins, also named type II transmembrane proteins, contain a single C-terminal transmembrane region (By similarity).</text>
</comment>
<comment type="subunit">
    <text evidence="1">Component of the BAT3 complex.</text>
</comment>
<comment type="subcellular location">
    <subcellularLocation>
        <location evidence="1">Cytoplasm</location>
        <location evidence="1">Cytosol</location>
    </subcellularLocation>
</comment>
<sequence length="154" mass="16884">MILTVKPLQGKECNVQVTEDEKVSTVKELVSERLNIPASQQRLLYKGKALADEHRLSDYSIGPEAKLNLVVRPAGERSGVAGMASSSSAVGGVWQTLSTVLAKHFSPADAAKVQEQLVKDYERSLRQLSMDDIERLAGRLLHPDSEGMDTSYMD</sequence>
<dbReference type="EMBL" id="BT073877">
    <property type="protein sequence ID" value="ACO08301.1"/>
    <property type="molecule type" value="mRNA"/>
</dbReference>
<dbReference type="SMR" id="C1BGZ8"/>
<dbReference type="Proteomes" id="UP000694395">
    <property type="component" value="Unplaced"/>
</dbReference>
<dbReference type="GO" id="GO:0071818">
    <property type="term" value="C:BAT3 complex"/>
    <property type="evidence" value="ECO:0000250"/>
    <property type="project" value="UniProtKB"/>
</dbReference>
<dbReference type="GO" id="GO:0005829">
    <property type="term" value="C:cytosol"/>
    <property type="evidence" value="ECO:0000250"/>
    <property type="project" value="UniProtKB"/>
</dbReference>
<dbReference type="GO" id="GO:0051087">
    <property type="term" value="F:protein-folding chaperone binding"/>
    <property type="evidence" value="ECO:0007669"/>
    <property type="project" value="TreeGrafter"/>
</dbReference>
<dbReference type="GO" id="GO:0006620">
    <property type="term" value="P:post-translational protein targeting to endoplasmic reticulum membrane"/>
    <property type="evidence" value="ECO:0007669"/>
    <property type="project" value="InterPro"/>
</dbReference>
<dbReference type="GO" id="GO:0071816">
    <property type="term" value="P:tail-anchored membrane protein insertion into ER membrane"/>
    <property type="evidence" value="ECO:0000250"/>
    <property type="project" value="UniProtKB"/>
</dbReference>
<dbReference type="CDD" id="cd01807">
    <property type="entry name" value="Ubl_UBL4A_like"/>
    <property type="match status" value="1"/>
</dbReference>
<dbReference type="FunFam" id="3.10.20.90:FF:000144">
    <property type="entry name" value="Ubiquitin-like protein 4A"/>
    <property type="match status" value="1"/>
</dbReference>
<dbReference type="Gene3D" id="3.10.20.90">
    <property type="entry name" value="Phosphatidylinositol 3-kinase Catalytic Subunit, Chain A, domain 1"/>
    <property type="match status" value="1"/>
</dbReference>
<dbReference type="InterPro" id="IPR000626">
    <property type="entry name" value="Ubiquitin-like_dom"/>
</dbReference>
<dbReference type="InterPro" id="IPR029071">
    <property type="entry name" value="Ubiquitin-like_domsf"/>
</dbReference>
<dbReference type="InterPro" id="IPR019954">
    <property type="entry name" value="Ubiquitin_CS"/>
</dbReference>
<dbReference type="InterPro" id="IPR019956">
    <property type="entry name" value="Ubiquitin_dom"/>
</dbReference>
<dbReference type="InterPro" id="IPR041421">
    <property type="entry name" value="Ubl4_C_TUGS"/>
</dbReference>
<dbReference type="InterPro" id="IPR047154">
    <property type="entry name" value="UBL4A-like"/>
</dbReference>
<dbReference type="InterPro" id="IPR044724">
    <property type="entry name" value="Ubl_UBL4A-like"/>
</dbReference>
<dbReference type="PANTHER" id="PTHR46555">
    <property type="entry name" value="UBIQUITIN-LIKE PROTEIN 4A"/>
    <property type="match status" value="1"/>
</dbReference>
<dbReference type="PANTHER" id="PTHR46555:SF1">
    <property type="entry name" value="UBIQUITIN-LIKE PROTEIN 4A"/>
    <property type="match status" value="1"/>
</dbReference>
<dbReference type="Pfam" id="PF17840">
    <property type="entry name" value="Tugs"/>
    <property type="match status" value="1"/>
</dbReference>
<dbReference type="Pfam" id="PF00240">
    <property type="entry name" value="ubiquitin"/>
    <property type="match status" value="1"/>
</dbReference>
<dbReference type="PRINTS" id="PR00348">
    <property type="entry name" value="UBIQUITIN"/>
</dbReference>
<dbReference type="SMART" id="SM00213">
    <property type="entry name" value="UBQ"/>
    <property type="match status" value="1"/>
</dbReference>
<dbReference type="SUPFAM" id="SSF54236">
    <property type="entry name" value="Ubiquitin-like"/>
    <property type="match status" value="1"/>
</dbReference>
<dbReference type="PROSITE" id="PS00299">
    <property type="entry name" value="UBIQUITIN_1"/>
    <property type="match status" value="1"/>
</dbReference>
<dbReference type="PROSITE" id="PS50053">
    <property type="entry name" value="UBIQUITIN_2"/>
    <property type="match status" value="1"/>
</dbReference>
<evidence type="ECO:0000250" key="1"/>
<evidence type="ECO:0000255" key="2">
    <source>
        <dbReference type="PROSITE-ProRule" id="PRU00214"/>
    </source>
</evidence>
<keyword id="KW-0963">Cytoplasm</keyword>
<keyword id="KW-0813">Transport</keyword>